<reference key="1">
    <citation type="journal article" date="2011" name="J. Bacteriol.">
        <title>Comparative genomics of 28 Salmonella enterica isolates: evidence for CRISPR-mediated adaptive sublineage evolution.</title>
        <authorList>
            <person name="Fricke W.F."/>
            <person name="Mammel M.K."/>
            <person name="McDermott P.F."/>
            <person name="Tartera C."/>
            <person name="White D.G."/>
            <person name="Leclerc J.E."/>
            <person name="Ravel J."/>
            <person name="Cebula T.A."/>
        </authorList>
    </citation>
    <scope>NUCLEOTIDE SEQUENCE [LARGE SCALE GENOMIC DNA]</scope>
    <source>
        <strain>CT_02021853</strain>
    </source>
</reference>
<gene>
    <name evidence="1" type="primary">tmk</name>
    <name type="ordered locus">SeD_A2169</name>
</gene>
<proteinExistence type="inferred from homology"/>
<evidence type="ECO:0000255" key="1">
    <source>
        <dbReference type="HAMAP-Rule" id="MF_00165"/>
    </source>
</evidence>
<protein>
    <recommendedName>
        <fullName evidence="1">Thymidylate kinase</fullName>
        <ecNumber evidence="1">2.7.4.9</ecNumber>
    </recommendedName>
    <alternativeName>
        <fullName evidence="1">dTMP kinase</fullName>
    </alternativeName>
</protein>
<dbReference type="EC" id="2.7.4.9" evidence="1"/>
<dbReference type="EMBL" id="CP001144">
    <property type="protein sequence ID" value="ACH77195.1"/>
    <property type="molecule type" value="Genomic_DNA"/>
</dbReference>
<dbReference type="RefSeq" id="WP_000535399.1">
    <property type="nucleotide sequence ID" value="NC_011205.1"/>
</dbReference>
<dbReference type="SMR" id="B5FKA7"/>
<dbReference type="KEGG" id="sed:SeD_A2169"/>
<dbReference type="HOGENOM" id="CLU_049131_0_1_6"/>
<dbReference type="Proteomes" id="UP000008322">
    <property type="component" value="Chromosome"/>
</dbReference>
<dbReference type="GO" id="GO:0005829">
    <property type="term" value="C:cytosol"/>
    <property type="evidence" value="ECO:0007669"/>
    <property type="project" value="TreeGrafter"/>
</dbReference>
<dbReference type="GO" id="GO:0005524">
    <property type="term" value="F:ATP binding"/>
    <property type="evidence" value="ECO:0007669"/>
    <property type="project" value="UniProtKB-UniRule"/>
</dbReference>
<dbReference type="GO" id="GO:0004798">
    <property type="term" value="F:dTMP kinase activity"/>
    <property type="evidence" value="ECO:0007669"/>
    <property type="project" value="UniProtKB-UniRule"/>
</dbReference>
<dbReference type="GO" id="GO:0006233">
    <property type="term" value="P:dTDP biosynthetic process"/>
    <property type="evidence" value="ECO:0007669"/>
    <property type="project" value="InterPro"/>
</dbReference>
<dbReference type="GO" id="GO:0006235">
    <property type="term" value="P:dTTP biosynthetic process"/>
    <property type="evidence" value="ECO:0007669"/>
    <property type="project" value="UniProtKB-UniRule"/>
</dbReference>
<dbReference type="GO" id="GO:0006227">
    <property type="term" value="P:dUDP biosynthetic process"/>
    <property type="evidence" value="ECO:0007669"/>
    <property type="project" value="TreeGrafter"/>
</dbReference>
<dbReference type="CDD" id="cd01672">
    <property type="entry name" value="TMPK"/>
    <property type="match status" value="1"/>
</dbReference>
<dbReference type="FunFam" id="3.40.50.300:FF:000321">
    <property type="entry name" value="Thymidylate kinase"/>
    <property type="match status" value="1"/>
</dbReference>
<dbReference type="Gene3D" id="3.40.50.300">
    <property type="entry name" value="P-loop containing nucleotide triphosphate hydrolases"/>
    <property type="match status" value="1"/>
</dbReference>
<dbReference type="HAMAP" id="MF_00165">
    <property type="entry name" value="Thymidylate_kinase"/>
    <property type="match status" value="1"/>
</dbReference>
<dbReference type="InterPro" id="IPR027417">
    <property type="entry name" value="P-loop_NTPase"/>
</dbReference>
<dbReference type="InterPro" id="IPR039430">
    <property type="entry name" value="Thymidylate_kin-like_dom"/>
</dbReference>
<dbReference type="InterPro" id="IPR018095">
    <property type="entry name" value="Thymidylate_kin_CS"/>
</dbReference>
<dbReference type="InterPro" id="IPR018094">
    <property type="entry name" value="Thymidylate_kinase"/>
</dbReference>
<dbReference type="NCBIfam" id="TIGR00041">
    <property type="entry name" value="DTMP_kinase"/>
    <property type="match status" value="1"/>
</dbReference>
<dbReference type="PANTHER" id="PTHR10344">
    <property type="entry name" value="THYMIDYLATE KINASE"/>
    <property type="match status" value="1"/>
</dbReference>
<dbReference type="PANTHER" id="PTHR10344:SF4">
    <property type="entry name" value="UMP-CMP KINASE 2, MITOCHONDRIAL"/>
    <property type="match status" value="1"/>
</dbReference>
<dbReference type="Pfam" id="PF02223">
    <property type="entry name" value="Thymidylate_kin"/>
    <property type="match status" value="1"/>
</dbReference>
<dbReference type="SUPFAM" id="SSF52540">
    <property type="entry name" value="P-loop containing nucleoside triphosphate hydrolases"/>
    <property type="match status" value="1"/>
</dbReference>
<dbReference type="PROSITE" id="PS01331">
    <property type="entry name" value="THYMIDYLATE_KINASE"/>
    <property type="match status" value="1"/>
</dbReference>
<comment type="function">
    <text evidence="1">Phosphorylation of dTMP to form dTDP in both de novo and salvage pathways of dTTP synthesis.</text>
</comment>
<comment type="catalytic activity">
    <reaction evidence="1">
        <text>dTMP + ATP = dTDP + ADP</text>
        <dbReference type="Rhea" id="RHEA:13517"/>
        <dbReference type="ChEBI" id="CHEBI:30616"/>
        <dbReference type="ChEBI" id="CHEBI:58369"/>
        <dbReference type="ChEBI" id="CHEBI:63528"/>
        <dbReference type="ChEBI" id="CHEBI:456216"/>
        <dbReference type="EC" id="2.7.4.9"/>
    </reaction>
</comment>
<comment type="similarity">
    <text evidence="1">Belongs to the thymidylate kinase family.</text>
</comment>
<keyword id="KW-0067">ATP-binding</keyword>
<keyword id="KW-0418">Kinase</keyword>
<keyword id="KW-0545">Nucleotide biosynthesis</keyword>
<keyword id="KW-0547">Nucleotide-binding</keyword>
<keyword id="KW-0808">Transferase</keyword>
<accession>B5FKA7</accession>
<name>KTHY_SALDC</name>
<organism>
    <name type="scientific">Salmonella dublin (strain CT_02021853)</name>
    <dbReference type="NCBI Taxonomy" id="439851"/>
    <lineage>
        <taxon>Bacteria</taxon>
        <taxon>Pseudomonadati</taxon>
        <taxon>Pseudomonadota</taxon>
        <taxon>Gammaproteobacteria</taxon>
        <taxon>Enterobacterales</taxon>
        <taxon>Enterobacteriaceae</taxon>
        <taxon>Salmonella</taxon>
    </lineage>
</organism>
<feature type="chain" id="PRO_1000097423" description="Thymidylate kinase">
    <location>
        <begin position="1"/>
        <end position="213"/>
    </location>
</feature>
<feature type="binding site" evidence="1">
    <location>
        <begin position="10"/>
        <end position="17"/>
    </location>
    <ligand>
        <name>ATP</name>
        <dbReference type="ChEBI" id="CHEBI:30616"/>
    </ligand>
</feature>
<sequence>MGSNYIVIEGLEGAGKTTARDVVVETLEQLGIRNMIFTREPGGTQLAEKLRSLVLDIRSVGDEVITDKAEVLMFYAARVQLVETVIKPALAQGVWVIGDRHDLSTQAYQGGGRGIDQTMLATLRDAVLGDFRPDLTLYLDVTPEVGLKRARARGDLDRIEQESFDFFNRTRARYLELAAQDSRIRTIDATQPLDAVMRDIRATVTKWVQEQAA</sequence>